<protein>
    <recommendedName>
        <fullName evidence="1">Type II restriction enzyme BstVI</fullName>
        <shortName evidence="2">R.BstVI</shortName>
        <ecNumber>3.1.21.4</ecNumber>
    </recommendedName>
    <alternativeName>
        <fullName>Endonuclease BstVI</fullName>
    </alternativeName>
    <alternativeName>
        <fullName>Type-2 restriction enzyme BstVI</fullName>
    </alternativeName>
</protein>
<dbReference type="EC" id="3.1.21.4"/>
<dbReference type="EMBL" id="L07643">
    <property type="protein sequence ID" value="AAA22281.1"/>
    <property type="molecule type" value="Genomic_DNA"/>
</dbReference>
<dbReference type="PIR" id="JN0798">
    <property type="entry name" value="JN0798"/>
</dbReference>
<dbReference type="REBASE" id="594">
    <property type="entry name" value="BstVI"/>
</dbReference>
<dbReference type="PRO" id="PR:P43421"/>
<dbReference type="GO" id="GO:0003677">
    <property type="term" value="F:DNA binding"/>
    <property type="evidence" value="ECO:0007669"/>
    <property type="project" value="InterPro"/>
</dbReference>
<dbReference type="GO" id="GO:0009036">
    <property type="term" value="F:type II site-specific deoxyribonuclease activity"/>
    <property type="evidence" value="ECO:0007669"/>
    <property type="project" value="UniProtKB-EC"/>
</dbReference>
<dbReference type="GO" id="GO:0009307">
    <property type="term" value="P:DNA restriction-modification system"/>
    <property type="evidence" value="ECO:0007669"/>
    <property type="project" value="UniProtKB-KW"/>
</dbReference>
<dbReference type="InterPro" id="IPR007636">
    <property type="entry name" value="Restrct_endonuc_II_XhoI"/>
</dbReference>
<dbReference type="Pfam" id="PF04555">
    <property type="entry name" value="XhoI"/>
    <property type="match status" value="1"/>
</dbReference>
<dbReference type="PIRSF" id="PIRSF000994">
    <property type="entry name" value="Restrict_endonuc_II_XhoI"/>
    <property type="match status" value="1"/>
</dbReference>
<feature type="chain" id="PRO_0000077289" description="Type II restriction enzyme BstVI">
    <location>
        <begin position="1"/>
        <end position="224"/>
    </location>
</feature>
<reference key="1">
    <citation type="journal article" date="1993" name="Gene">
        <title>Characterization of the bstVIRM genes encoding the Bacillus stearothermophilus V restriction-modification system.</title>
        <authorList>
            <person name="Gonzalez E."/>
            <person name="Vasquez C."/>
        </authorList>
    </citation>
    <scope>NUCLEOTIDE SEQUENCE [GENOMIC DNA]</scope>
    <source>
        <strain>V</strain>
    </source>
</reference>
<reference key="2">
    <citation type="journal article" date="2003" name="Nucleic Acids Res.">
        <title>A nomenclature for restriction enzymes, DNA methyltransferases, homing endonucleases and their genes.</title>
        <authorList>
            <person name="Roberts R.J."/>
            <person name="Belfort M."/>
            <person name="Bestor T."/>
            <person name="Bhagwat A.S."/>
            <person name="Bickle T.A."/>
            <person name="Bitinaite J."/>
            <person name="Blumenthal R.M."/>
            <person name="Degtyarev S.K."/>
            <person name="Dryden D.T."/>
            <person name="Dybvig K."/>
            <person name="Firman K."/>
            <person name="Gromova E.S."/>
            <person name="Gumport R.I."/>
            <person name="Halford S.E."/>
            <person name="Hattman S."/>
            <person name="Heitman J."/>
            <person name="Hornby D.P."/>
            <person name="Janulaitis A."/>
            <person name="Jeltsch A."/>
            <person name="Josephsen J."/>
            <person name="Kiss A."/>
            <person name="Klaenhammer T.R."/>
            <person name="Kobayashi I."/>
            <person name="Kong H."/>
            <person name="Krueger D.H."/>
            <person name="Lacks S."/>
            <person name="Marinus M.G."/>
            <person name="Miyahara M."/>
            <person name="Morgan R.D."/>
            <person name="Murray N.E."/>
            <person name="Nagaraja V."/>
            <person name="Piekarowicz A."/>
            <person name="Pingoud A."/>
            <person name="Raleigh E."/>
            <person name="Rao D.N."/>
            <person name="Reich N."/>
            <person name="Repin V.E."/>
            <person name="Selker E.U."/>
            <person name="Shaw P.C."/>
            <person name="Stein D.C."/>
            <person name="Stoddard B.L."/>
            <person name="Szybalski W."/>
            <person name="Trautner T.A."/>
            <person name="Van Etten J.L."/>
            <person name="Vitor J.M."/>
            <person name="Wilson G.G."/>
            <person name="Xu S.Y."/>
        </authorList>
    </citation>
    <scope>NOMENCLATURE</scope>
    <scope>SUBTYPE</scope>
</reference>
<gene>
    <name evidence="2" type="primary">bstVIR</name>
</gene>
<accession>P43421</accession>
<keyword id="KW-0255">Endonuclease</keyword>
<keyword id="KW-0378">Hydrolase</keyword>
<keyword id="KW-0540">Nuclease</keyword>
<keyword id="KW-0680">Restriction system</keyword>
<comment type="function">
    <text evidence="1">A P subtype restriction enzyme that recognizes the double-stranded sequence 5'-CTCGAG-3' and cleaves after C-1.</text>
</comment>
<comment type="catalytic activity">
    <reaction>
        <text>Endonucleolytic cleavage of DNA to give specific double-stranded fragments with terminal 5'-phosphates.</text>
        <dbReference type="EC" id="3.1.21.4"/>
    </reaction>
</comment>
<comment type="similarity">
    <text evidence="3">Belongs to the XhoI type II restriction endonuclease family.</text>
</comment>
<evidence type="ECO:0000303" key="1">
    <source>
    </source>
</evidence>
<evidence type="ECO:0000303" key="2">
    <source>
    </source>
</evidence>
<evidence type="ECO:0000305" key="3"/>
<name>T2V1_GEOSE</name>
<proteinExistence type="inferred from homology"/>
<organism>
    <name type="scientific">Geobacillus stearothermophilus</name>
    <name type="common">Bacillus stearothermophilus</name>
    <dbReference type="NCBI Taxonomy" id="1422"/>
    <lineage>
        <taxon>Bacteria</taxon>
        <taxon>Bacillati</taxon>
        <taxon>Bacillota</taxon>
        <taxon>Bacilli</taxon>
        <taxon>Bacillales</taxon>
        <taxon>Anoxybacillaceae</taxon>
        <taxon>Geobacillus</taxon>
    </lineage>
</organism>
<sequence length="224" mass="25155">MNKQASGKDTGNRGAVTGGKQMDGFADMLTNLLSKVGISNHEVFTSEKPHLPGYFRATKKWDFLVVKTNDRGEKYLLAAVELKSHVGPSFGNNLNNRVEESLGSATDIWIAFREKAFKNSRAPWLGYLMLLEDCPQSTKPVKVDEPHFEVFPEFKNASYAKRYELFCRKIVLERKYTSSCLLMSDKQGGLQGIYKEPANDLKIYPFLYSLLTHVATEAALISSS</sequence>